<name>RN2A_PELRI</name>
<accession>P86020</accession>
<dbReference type="GO" id="GO:0005576">
    <property type="term" value="C:extracellular region"/>
    <property type="evidence" value="ECO:0007669"/>
    <property type="project" value="UniProtKB-SubCell"/>
</dbReference>
<dbReference type="GO" id="GO:0042742">
    <property type="term" value="P:defense response to bacterium"/>
    <property type="evidence" value="ECO:0007669"/>
    <property type="project" value="UniProtKB-KW"/>
</dbReference>
<proteinExistence type="evidence at protein level"/>
<organism>
    <name type="scientific">Pelophylax ridibundus</name>
    <name type="common">Marsh frog</name>
    <name type="synonym">Rana ridibunda</name>
    <dbReference type="NCBI Taxonomy" id="8406"/>
    <lineage>
        <taxon>Eukaryota</taxon>
        <taxon>Metazoa</taxon>
        <taxon>Chordata</taxon>
        <taxon>Craniata</taxon>
        <taxon>Vertebrata</taxon>
        <taxon>Euteleostomi</taxon>
        <taxon>Amphibia</taxon>
        <taxon>Batrachia</taxon>
        <taxon>Anura</taxon>
        <taxon>Neobatrachia</taxon>
        <taxon>Ranoidea</taxon>
        <taxon>Ranidae</taxon>
        <taxon>Pelophylax</taxon>
    </lineage>
</organism>
<reference evidence="6" key="1">
    <citation type="journal article" date="2008" name="Rapid Commun. Mass Spectrom.">
        <title>De novo sequencing of peptides secreted by the skin glands of the caucasian green frog Rana ridibunda.</title>
        <authorList>
            <person name="Samgina T.Y."/>
            <person name="Artemenko K.A."/>
            <person name="Gorshkov V.A."/>
            <person name="Ogourtsov S.V."/>
            <person name="Zubarev R.A."/>
            <person name="Lebedev A.T."/>
        </authorList>
    </citation>
    <scope>PROTEIN SEQUENCE</scope>
    <scope>SUBCELLULAR LOCATION</scope>
    <scope>MASS SPECTROMETRY</scope>
    <scope>DISULFIDE BOND</scope>
    <source>
        <tissue evidence="4">Skin secretion</tissue>
    </source>
</reference>
<reference key="2">
    <citation type="journal article" date="2017" name="Anal. Bioanal. Chem.">
        <title>Differentiation of frogs from two populations belonging to the Pelophylax esculentus complex by LC-MS/MS comparison of their skin peptidomes.</title>
        <authorList>
            <person name="Samgina T.Y."/>
            <person name="Artemenko K.A."/>
            <person name="Bergquist J."/>
            <person name="Trebse P."/>
            <person name="Torkar G."/>
            <person name="Tolpina M.D."/>
            <person name="Lebedev A.T."/>
        </authorList>
    </citation>
    <scope>PROTEIN SEQUENCE</scope>
    <scope>SUBCELLULAR LOCATION</scope>
    <scope>DISULFIDE BOND</scope>
    <scope>MASS SPECTROMETRY</scope>
    <scope>IDENTIFICATION BY MASS SPECTROMETRY</scope>
    <source>
        <tissue evidence="5">Skin secretion</tissue>
    </source>
</reference>
<sequence length="17" mass="1894">AAKLLLNPKFRCKAAFC</sequence>
<comment type="function">
    <text evidence="1">Antimicrobial peptide.</text>
</comment>
<comment type="subcellular location">
    <subcellularLocation>
        <location evidence="2 3">Secreted</location>
    </subcellularLocation>
</comment>
<comment type="tissue specificity">
    <text evidence="7">Expressed by the skin glands.</text>
</comment>
<comment type="mass spectrometry" mass="1892.0" method="Electrospray" evidence="2"/>
<comment type="mass spectrometry" mass="1891.0" method="Electrospray" evidence="3"/>
<comment type="similarity">
    <text evidence="6">Belongs to the frog skin active peptide (FSAP) family. Ranatuerin subfamily.</text>
</comment>
<feature type="peptide" id="PRO_0000361069" description="Ranatuerin-2Ra" evidence="2 3">
    <location>
        <begin position="1"/>
        <end position="17"/>
    </location>
</feature>
<feature type="disulfide bond" evidence="2 3">
    <location>
        <begin position="12"/>
        <end position="17"/>
    </location>
</feature>
<keyword id="KW-0878">Amphibian defense peptide</keyword>
<keyword id="KW-0044">Antibiotic</keyword>
<keyword id="KW-0929">Antimicrobial</keyword>
<keyword id="KW-0903">Direct protein sequencing</keyword>
<keyword id="KW-1015">Disulfide bond</keyword>
<keyword id="KW-0964">Secreted</keyword>
<protein>
    <recommendedName>
        <fullName evidence="4">Ranatuerin-2Ra</fullName>
    </recommendedName>
</protein>
<evidence type="ECO:0000250" key="1"/>
<evidence type="ECO:0000269" key="2">
    <source>
    </source>
</evidence>
<evidence type="ECO:0000269" key="3">
    <source>
    </source>
</evidence>
<evidence type="ECO:0000303" key="4">
    <source>
    </source>
</evidence>
<evidence type="ECO:0000303" key="5">
    <source>
    </source>
</evidence>
<evidence type="ECO:0000305" key="6"/>
<evidence type="ECO:0000305" key="7">
    <source>
    </source>
</evidence>